<feature type="chain" id="PRO_1000059542" description="Chaperone protein DnaK">
    <location>
        <begin position="1"/>
        <end position="615"/>
    </location>
</feature>
<feature type="region of interest" description="Disordered" evidence="2">
    <location>
        <begin position="573"/>
        <end position="615"/>
    </location>
</feature>
<feature type="compositionally biased region" description="Low complexity" evidence="2">
    <location>
        <begin position="580"/>
        <end position="594"/>
    </location>
</feature>
<feature type="compositionally biased region" description="Basic and acidic residues" evidence="2">
    <location>
        <begin position="597"/>
        <end position="609"/>
    </location>
</feature>
<feature type="modified residue" description="Phosphothreonine; by autocatalysis" evidence="1">
    <location>
        <position position="175"/>
    </location>
</feature>
<organism>
    <name type="scientific">Clostridioides difficile (strain 630)</name>
    <name type="common">Peptoclostridium difficile</name>
    <dbReference type="NCBI Taxonomy" id="272563"/>
    <lineage>
        <taxon>Bacteria</taxon>
        <taxon>Bacillati</taxon>
        <taxon>Bacillota</taxon>
        <taxon>Clostridia</taxon>
        <taxon>Peptostreptococcales</taxon>
        <taxon>Peptostreptococcaceae</taxon>
        <taxon>Clostridioides</taxon>
    </lineage>
</organism>
<keyword id="KW-0067">ATP-binding</keyword>
<keyword id="KW-0143">Chaperone</keyword>
<keyword id="KW-0547">Nucleotide-binding</keyword>
<keyword id="KW-0597">Phosphoprotein</keyword>
<keyword id="KW-1185">Reference proteome</keyword>
<keyword id="KW-0346">Stress response</keyword>
<comment type="function">
    <text evidence="1">Acts as a chaperone.</text>
</comment>
<comment type="induction">
    <text evidence="1">By stress conditions e.g. heat shock.</text>
</comment>
<comment type="similarity">
    <text evidence="1">Belongs to the heat shock protein 70 family.</text>
</comment>
<protein>
    <recommendedName>
        <fullName evidence="1">Chaperone protein DnaK</fullName>
    </recommendedName>
    <alternativeName>
        <fullName evidence="1">HSP70</fullName>
    </alternativeName>
    <alternativeName>
        <fullName evidence="1">Heat shock 70 kDa protein</fullName>
    </alternativeName>
    <alternativeName>
        <fullName evidence="1">Heat shock protein 70</fullName>
    </alternativeName>
</protein>
<accession>Q182E8</accession>
<sequence length="615" mass="66468">MGKIIGIDLGTTNSCVAVLEGGEAQIIANSEGMRTTPSVVAFTKDGERIVGEPAKRQAVTNADKTITSIKTHMGTDYKVNIDGKSYTPQEISAIILQKLKSDAESYLGQTVTEAVITVPAYFTDAQRQATKDAGRIAGLDVKRIINEPTAAALAYGMDKLDQEKKILVFDLGGGTFDVSILEIGDGTFEVLATAGNNRLGGDDFDQIVIDYLAEEFKKAEGVDLRNDKMALQRLKEAAEKAKKELSSTMSSNINLPFITATAEGPKHLNIDLSRAKFEELTRGLVEKTMEPTKTALQDAGLSTGDIDDVLLVGGSTRIPAVQEAVKKFIGKEPHKGINPDECVAAGASIQAGVLAGDVKDLLLLDVTPLSLGIETMGNVMTKIIERNTTIPTKKSQIFSTAADNQTAVDIHVLQGERSMAYDNTTLGRFQLTDIPPAQRGIPQIEVTFDIDANGIVNVSAKDLGTGKEQKITITSNTNLSEAEIEQKIKEAEMNAEADKQKKEKIEAFNQAESTIYQTEKTLNELGDKISSGEKEDIEKAIADLKAVKDNQDATAEELKKATDEVMTKFQKVSQEMYQKAAQEQQAAQGAEQAQDNGPKDDNVVDADFKEVDEDK</sequence>
<reference key="1">
    <citation type="journal article" date="2006" name="Nat. Genet.">
        <title>The multidrug-resistant human pathogen Clostridium difficile has a highly mobile, mosaic genome.</title>
        <authorList>
            <person name="Sebaihia M."/>
            <person name="Wren B.W."/>
            <person name="Mullany P."/>
            <person name="Fairweather N.F."/>
            <person name="Minton N."/>
            <person name="Stabler R."/>
            <person name="Thomson N.R."/>
            <person name="Roberts A.P."/>
            <person name="Cerdeno-Tarraga A.M."/>
            <person name="Wang H."/>
            <person name="Holden M.T.G."/>
            <person name="Wright A."/>
            <person name="Churcher C."/>
            <person name="Quail M.A."/>
            <person name="Baker S."/>
            <person name="Bason N."/>
            <person name="Brooks K."/>
            <person name="Chillingworth T."/>
            <person name="Cronin A."/>
            <person name="Davis P."/>
            <person name="Dowd L."/>
            <person name="Fraser A."/>
            <person name="Feltwell T."/>
            <person name="Hance Z."/>
            <person name="Holroyd S."/>
            <person name="Jagels K."/>
            <person name="Moule S."/>
            <person name="Mungall K."/>
            <person name="Price C."/>
            <person name="Rabbinowitsch E."/>
            <person name="Sharp S."/>
            <person name="Simmonds M."/>
            <person name="Stevens K."/>
            <person name="Unwin L."/>
            <person name="Whithead S."/>
            <person name="Dupuy B."/>
            <person name="Dougan G."/>
            <person name="Barrell B."/>
            <person name="Parkhill J."/>
        </authorList>
    </citation>
    <scope>NUCLEOTIDE SEQUENCE [LARGE SCALE GENOMIC DNA]</scope>
    <source>
        <strain>630</strain>
    </source>
</reference>
<evidence type="ECO:0000255" key="1">
    <source>
        <dbReference type="HAMAP-Rule" id="MF_00332"/>
    </source>
</evidence>
<evidence type="ECO:0000256" key="2">
    <source>
        <dbReference type="SAM" id="MobiDB-lite"/>
    </source>
</evidence>
<gene>
    <name evidence="1" type="primary">dnaK</name>
    <name type="ordered locus">CD630_24610</name>
</gene>
<proteinExistence type="inferred from homology"/>
<dbReference type="EMBL" id="AM180355">
    <property type="protein sequence ID" value="CAJ69348.1"/>
    <property type="molecule type" value="Genomic_DNA"/>
</dbReference>
<dbReference type="RefSeq" id="WP_003430934.1">
    <property type="nucleotide sequence ID" value="NZ_JAUPES010000003.1"/>
</dbReference>
<dbReference type="RefSeq" id="YP_001088975.1">
    <property type="nucleotide sequence ID" value="NC_009089.1"/>
</dbReference>
<dbReference type="SMR" id="Q182E8"/>
<dbReference type="STRING" id="272563.CD630_24610"/>
<dbReference type="EnsemblBacteria" id="CAJ69348">
    <property type="protein sequence ID" value="CAJ69348"/>
    <property type="gene ID" value="CD630_24610"/>
</dbReference>
<dbReference type="GeneID" id="66354859"/>
<dbReference type="KEGG" id="cdf:CD630_24610"/>
<dbReference type="KEGG" id="pdc:CDIF630_02707"/>
<dbReference type="PATRIC" id="fig|272563.120.peg.2600"/>
<dbReference type="eggNOG" id="COG0443">
    <property type="taxonomic scope" value="Bacteria"/>
</dbReference>
<dbReference type="OrthoDB" id="9766019at2"/>
<dbReference type="PhylomeDB" id="Q182E8"/>
<dbReference type="BioCyc" id="PDIF272563:G12WB-2616-MONOMER"/>
<dbReference type="Proteomes" id="UP000001978">
    <property type="component" value="Chromosome"/>
</dbReference>
<dbReference type="GO" id="GO:0005524">
    <property type="term" value="F:ATP binding"/>
    <property type="evidence" value="ECO:0007669"/>
    <property type="project" value="UniProtKB-UniRule"/>
</dbReference>
<dbReference type="GO" id="GO:0140662">
    <property type="term" value="F:ATP-dependent protein folding chaperone"/>
    <property type="evidence" value="ECO:0007669"/>
    <property type="project" value="InterPro"/>
</dbReference>
<dbReference type="GO" id="GO:0051082">
    <property type="term" value="F:unfolded protein binding"/>
    <property type="evidence" value="ECO:0007669"/>
    <property type="project" value="InterPro"/>
</dbReference>
<dbReference type="CDD" id="cd10234">
    <property type="entry name" value="ASKHA_NBD_HSP70_DnaK-like"/>
    <property type="match status" value="1"/>
</dbReference>
<dbReference type="FunFam" id="2.60.34.10:FF:000014">
    <property type="entry name" value="Chaperone protein DnaK HSP70"/>
    <property type="match status" value="1"/>
</dbReference>
<dbReference type="FunFam" id="1.20.1270.10:FF:000001">
    <property type="entry name" value="Molecular chaperone DnaK"/>
    <property type="match status" value="1"/>
</dbReference>
<dbReference type="FunFam" id="3.30.420.40:FF:000071">
    <property type="entry name" value="Molecular chaperone DnaK"/>
    <property type="match status" value="1"/>
</dbReference>
<dbReference type="FunFam" id="3.90.640.10:FF:000003">
    <property type="entry name" value="Molecular chaperone DnaK"/>
    <property type="match status" value="1"/>
</dbReference>
<dbReference type="Gene3D" id="1.20.1270.10">
    <property type="match status" value="1"/>
</dbReference>
<dbReference type="Gene3D" id="3.30.420.40">
    <property type="match status" value="2"/>
</dbReference>
<dbReference type="Gene3D" id="3.90.640.10">
    <property type="entry name" value="Actin, Chain A, domain 4"/>
    <property type="match status" value="1"/>
</dbReference>
<dbReference type="Gene3D" id="2.60.34.10">
    <property type="entry name" value="Substrate Binding Domain Of DNAk, Chain A, domain 1"/>
    <property type="match status" value="1"/>
</dbReference>
<dbReference type="HAMAP" id="MF_00332">
    <property type="entry name" value="DnaK"/>
    <property type="match status" value="1"/>
</dbReference>
<dbReference type="InterPro" id="IPR043129">
    <property type="entry name" value="ATPase_NBD"/>
</dbReference>
<dbReference type="InterPro" id="IPR012725">
    <property type="entry name" value="Chaperone_DnaK"/>
</dbReference>
<dbReference type="InterPro" id="IPR018181">
    <property type="entry name" value="Heat_shock_70_CS"/>
</dbReference>
<dbReference type="InterPro" id="IPR029048">
    <property type="entry name" value="HSP70_C_sf"/>
</dbReference>
<dbReference type="InterPro" id="IPR029047">
    <property type="entry name" value="HSP70_peptide-bd_sf"/>
</dbReference>
<dbReference type="InterPro" id="IPR013126">
    <property type="entry name" value="Hsp_70_fam"/>
</dbReference>
<dbReference type="NCBIfam" id="NF001413">
    <property type="entry name" value="PRK00290.1"/>
    <property type="match status" value="1"/>
</dbReference>
<dbReference type="NCBIfam" id="TIGR02350">
    <property type="entry name" value="prok_dnaK"/>
    <property type="match status" value="1"/>
</dbReference>
<dbReference type="PANTHER" id="PTHR19375">
    <property type="entry name" value="HEAT SHOCK PROTEIN 70KDA"/>
    <property type="match status" value="1"/>
</dbReference>
<dbReference type="Pfam" id="PF00012">
    <property type="entry name" value="HSP70"/>
    <property type="match status" value="1"/>
</dbReference>
<dbReference type="PRINTS" id="PR00301">
    <property type="entry name" value="HEATSHOCK70"/>
</dbReference>
<dbReference type="SUPFAM" id="SSF53067">
    <property type="entry name" value="Actin-like ATPase domain"/>
    <property type="match status" value="2"/>
</dbReference>
<dbReference type="SUPFAM" id="SSF100934">
    <property type="entry name" value="Heat shock protein 70kD (HSP70), C-terminal subdomain"/>
    <property type="match status" value="1"/>
</dbReference>
<dbReference type="SUPFAM" id="SSF100920">
    <property type="entry name" value="Heat shock protein 70kD (HSP70), peptide-binding domain"/>
    <property type="match status" value="1"/>
</dbReference>
<dbReference type="PROSITE" id="PS00297">
    <property type="entry name" value="HSP70_1"/>
    <property type="match status" value="1"/>
</dbReference>
<dbReference type="PROSITE" id="PS00329">
    <property type="entry name" value="HSP70_2"/>
    <property type="match status" value="1"/>
</dbReference>
<dbReference type="PROSITE" id="PS01036">
    <property type="entry name" value="HSP70_3"/>
    <property type="match status" value="1"/>
</dbReference>
<name>DNAK_CLOD6</name>